<dbReference type="EMBL" id="AAFI02000006">
    <property type="protein sequence ID" value="EAL71534.1"/>
    <property type="molecule type" value="Genomic_DNA"/>
</dbReference>
<dbReference type="RefSeq" id="XP_645479.1">
    <property type="nucleotide sequence ID" value="XM_640387.1"/>
</dbReference>
<dbReference type="SMR" id="Q55AP3"/>
<dbReference type="FunCoup" id="Q55AP3">
    <property type="interactions" value="12"/>
</dbReference>
<dbReference type="GlyCosmos" id="Q55AP3">
    <property type="glycosylation" value="6 sites, No reported glycans"/>
</dbReference>
<dbReference type="GlyGen" id="Q55AP3">
    <property type="glycosylation" value="6 sites"/>
</dbReference>
<dbReference type="PaxDb" id="44689-DDB0230121"/>
<dbReference type="EnsemblProtists" id="EAL71534">
    <property type="protein sequence ID" value="EAL71534"/>
    <property type="gene ID" value="DDB_G0271688"/>
</dbReference>
<dbReference type="GeneID" id="8618107"/>
<dbReference type="KEGG" id="ddi:DDB_G0271688"/>
<dbReference type="dictyBase" id="DDB_G0271688">
    <property type="gene designation" value="grlO"/>
</dbReference>
<dbReference type="VEuPathDB" id="AmoebaDB:DDB_G0271688"/>
<dbReference type="eggNOG" id="KOG1055">
    <property type="taxonomic scope" value="Eukaryota"/>
</dbReference>
<dbReference type="HOGENOM" id="CLU_365408_0_0_1"/>
<dbReference type="InParanoid" id="Q55AP3"/>
<dbReference type="PhylomeDB" id="Q55AP3"/>
<dbReference type="PRO" id="PR:Q55AP3"/>
<dbReference type="Proteomes" id="UP000002195">
    <property type="component" value="Chromosome 2"/>
</dbReference>
<dbReference type="GO" id="GO:0005886">
    <property type="term" value="C:plasma membrane"/>
    <property type="evidence" value="ECO:0000318"/>
    <property type="project" value="GO_Central"/>
</dbReference>
<dbReference type="GO" id="GO:0004930">
    <property type="term" value="F:G protein-coupled receptor activity"/>
    <property type="evidence" value="ECO:0000318"/>
    <property type="project" value="GO_Central"/>
</dbReference>
<dbReference type="GO" id="GO:0007186">
    <property type="term" value="P:G protein-coupled receptor signaling pathway"/>
    <property type="evidence" value="ECO:0000318"/>
    <property type="project" value="GO_Central"/>
</dbReference>
<dbReference type="CDD" id="cd15047">
    <property type="entry name" value="7tmC_GABA-B-like"/>
    <property type="match status" value="1"/>
</dbReference>
<dbReference type="Gene3D" id="3.40.50.2300">
    <property type="match status" value="2"/>
</dbReference>
<dbReference type="InterPro" id="IPR017978">
    <property type="entry name" value="GPCR_3_C"/>
</dbReference>
<dbReference type="InterPro" id="IPR051530">
    <property type="entry name" value="mGluR/GABA-B-like"/>
</dbReference>
<dbReference type="InterPro" id="IPR003760">
    <property type="entry name" value="PnrA-like"/>
</dbReference>
<dbReference type="PANTHER" id="PTHR46924:SF2">
    <property type="entry name" value="METABOTROPIC GLUTAMATE RECEPTOR-LIKE PROTEIN A-RELATED"/>
    <property type="match status" value="1"/>
</dbReference>
<dbReference type="PANTHER" id="PTHR46924">
    <property type="entry name" value="METABOTROPIC GLUTAMATE RECEPTOR-LIKE PROTEIN C-RELATED-RELATED"/>
    <property type="match status" value="1"/>
</dbReference>
<dbReference type="Pfam" id="PF00003">
    <property type="entry name" value="7tm_3"/>
    <property type="match status" value="1"/>
</dbReference>
<dbReference type="Pfam" id="PF02608">
    <property type="entry name" value="Bmp"/>
    <property type="match status" value="1"/>
</dbReference>
<dbReference type="PRINTS" id="PR01176">
    <property type="entry name" value="GABABRECEPTR"/>
</dbReference>
<dbReference type="PROSITE" id="PS50259">
    <property type="entry name" value="G_PROTEIN_RECEP_F3_4"/>
    <property type="match status" value="1"/>
</dbReference>
<organism>
    <name type="scientific">Dictyostelium discoideum</name>
    <name type="common">Social amoeba</name>
    <dbReference type="NCBI Taxonomy" id="44689"/>
    <lineage>
        <taxon>Eukaryota</taxon>
        <taxon>Amoebozoa</taxon>
        <taxon>Evosea</taxon>
        <taxon>Eumycetozoa</taxon>
        <taxon>Dictyostelia</taxon>
        <taxon>Dictyosteliales</taxon>
        <taxon>Dictyosteliaceae</taxon>
        <taxon>Dictyostelium</taxon>
    </lineage>
</organism>
<sequence>MKKVFFLILILNCVVGALSNKNICKISLLLSGDYNDIGVNYMFNYARTQVEKNLNINSIVFTNLENNQNAINNAIIESINKGSNFLISTINSHSNFIINYSRLYKNKEIFWLIKGNDNERPIPDDLPRVKILNINSDLSFYYLGFISSLISKTGKIGFISTKNIETDYQRLTNAFYIGAINSNPNITFLVCSNNFNNQNNNKKISYKISKLLISKGVDFIGSDQDDNSIQLAVIDNGGIGLGLTGFEYSKIYNDKFPFSFKLEWSQLLIDITNTIINGSWVDYDIIYITSFSRLNGTTNFTPEIEPIINYNFIPKIYQKQINDEINKLKNHSTNYYFPHLCNNLFNNIYNQKQTNGCITNEQFSNSHLLNASNIKIIDNKEILEFVDSYSNSIKISILSVSIFCIFICVLGMIFITVLRNARILKSSSPSFLLLILFGCIVIFTGCILFSQPATDKTCQGRVWLLSIGYTIFLGSLLIKNWRVWLLFDNKKLRKRSITNWKLYPWVAGILVVDVLILALWQGLGDIKSESRIIGTSFYQYTNVCTNNDQGSIALYILLAFHGLKLLGTCFISFKIKLVDIEEFNESKPITTSVFIILFCIFTIILLIAPSSSSSSASSPQPIASLETIICICSVTTTAISIGLLFGDKIYFITTQGLGLNQTFAKSSSFSLDKKDCDDDDDDSSDGSDHSNSNKNKNKNKNRNQSEKKKRPNSIKPIGLFSKSKQESVVFNPPSNNDLTNELALPIEGIKEGHGHDSENNDEYEHHEDEDHEYEGEGEDEDHEDEYEVENDIEQEQEQESSNISISTKKNNENEIISDT</sequence>
<gene>
    <name type="primary">grlO</name>
    <name type="ORF">DDB_G0271688</name>
</gene>
<name>GRLO_DICDI</name>
<feature type="signal peptide" evidence="1">
    <location>
        <begin position="1"/>
        <end position="19"/>
    </location>
</feature>
<feature type="chain" id="PRO_0000370358" description="Metabotropic glutamate receptor-like protein O">
    <location>
        <begin position="20"/>
        <end position="819"/>
    </location>
</feature>
<feature type="topological domain" description="Extracellular" evidence="1">
    <location>
        <begin position="20"/>
        <end position="394"/>
    </location>
</feature>
<feature type="transmembrane region" description="Helical; Name=1" evidence="1">
    <location>
        <begin position="395"/>
        <end position="415"/>
    </location>
</feature>
<feature type="topological domain" description="Cytoplasmic" evidence="1">
    <location>
        <begin position="416"/>
        <end position="428"/>
    </location>
</feature>
<feature type="transmembrane region" description="Helical; Name=2" evidence="1">
    <location>
        <begin position="429"/>
        <end position="449"/>
    </location>
</feature>
<feature type="topological domain" description="Extracellular" evidence="1">
    <location>
        <begin position="450"/>
        <end position="457"/>
    </location>
</feature>
<feature type="transmembrane region" description="Helical; Name=3" evidence="1">
    <location>
        <begin position="458"/>
        <end position="478"/>
    </location>
</feature>
<feature type="topological domain" description="Cytoplasmic" evidence="1">
    <location>
        <begin position="479"/>
        <end position="503"/>
    </location>
</feature>
<feature type="transmembrane region" description="Helical; Name=4" evidence="1">
    <location>
        <begin position="504"/>
        <end position="524"/>
    </location>
</feature>
<feature type="topological domain" description="Extracellular" evidence="1">
    <location>
        <begin position="525"/>
        <end position="550"/>
    </location>
</feature>
<feature type="transmembrane region" description="Helical; Name=5" evidence="1">
    <location>
        <begin position="551"/>
        <end position="571"/>
    </location>
</feature>
<feature type="topological domain" description="Cytoplasmic" evidence="1">
    <location>
        <begin position="572"/>
        <end position="587"/>
    </location>
</feature>
<feature type="transmembrane region" description="Helical; Name=6" evidence="1">
    <location>
        <begin position="588"/>
        <end position="608"/>
    </location>
</feature>
<feature type="topological domain" description="Extracellular" evidence="1">
    <location>
        <begin position="609"/>
        <end position="624"/>
    </location>
</feature>
<feature type="transmembrane region" description="Helical; Name=7" evidence="1">
    <location>
        <begin position="625"/>
        <end position="645"/>
    </location>
</feature>
<feature type="topological domain" description="Cytoplasmic" evidence="1">
    <location>
        <begin position="646"/>
        <end position="819"/>
    </location>
</feature>
<feature type="region of interest" description="Disordered" evidence="2">
    <location>
        <begin position="674"/>
        <end position="819"/>
    </location>
</feature>
<feature type="compositionally biased region" description="Basic residues" evidence="2">
    <location>
        <begin position="695"/>
        <end position="712"/>
    </location>
</feature>
<feature type="compositionally biased region" description="Polar residues" evidence="2">
    <location>
        <begin position="726"/>
        <end position="739"/>
    </location>
</feature>
<feature type="compositionally biased region" description="Basic and acidic residues" evidence="2">
    <location>
        <begin position="748"/>
        <end position="768"/>
    </location>
</feature>
<feature type="compositionally biased region" description="Acidic residues" evidence="2">
    <location>
        <begin position="769"/>
        <end position="798"/>
    </location>
</feature>
<feature type="compositionally biased region" description="Low complexity" evidence="2">
    <location>
        <begin position="799"/>
        <end position="808"/>
    </location>
</feature>
<feature type="glycosylation site" description="N-linked (GlcNAc...) asparagine" evidence="1">
    <location>
        <position position="99"/>
    </location>
</feature>
<feature type="glycosylation site" description="N-linked (GlcNAc...) asparagine" evidence="1">
    <location>
        <position position="185"/>
    </location>
</feature>
<feature type="glycosylation site" description="N-linked (GlcNAc...) asparagine" evidence="1">
    <location>
        <position position="277"/>
    </location>
</feature>
<feature type="glycosylation site" description="N-linked (GlcNAc...) asparagine" evidence="1">
    <location>
        <position position="295"/>
    </location>
</feature>
<feature type="glycosylation site" description="N-linked (GlcNAc...) asparagine" evidence="1">
    <location>
        <position position="330"/>
    </location>
</feature>
<feature type="glycosylation site" description="N-linked (GlcNAc...) asparagine" evidence="1">
    <location>
        <position position="370"/>
    </location>
</feature>
<reference key="1">
    <citation type="journal article" date="2002" name="Nature">
        <title>Sequence and analysis of chromosome 2 of Dictyostelium discoideum.</title>
        <authorList>
            <person name="Gloeckner G."/>
            <person name="Eichinger L."/>
            <person name="Szafranski K."/>
            <person name="Pachebat J.A."/>
            <person name="Bankier A.T."/>
            <person name="Dear P.H."/>
            <person name="Lehmann R."/>
            <person name="Baumgart C."/>
            <person name="Parra G."/>
            <person name="Abril J.F."/>
            <person name="Guigo R."/>
            <person name="Kumpf K."/>
            <person name="Tunggal B."/>
            <person name="Cox E.C."/>
            <person name="Quail M.A."/>
            <person name="Platzer M."/>
            <person name="Rosenthal A."/>
            <person name="Noegel A.A."/>
        </authorList>
    </citation>
    <scope>NUCLEOTIDE SEQUENCE [LARGE SCALE GENOMIC DNA]</scope>
    <source>
        <strain>AX4</strain>
    </source>
</reference>
<reference key="2">
    <citation type="journal article" date="2005" name="Nature">
        <title>The genome of the social amoeba Dictyostelium discoideum.</title>
        <authorList>
            <person name="Eichinger L."/>
            <person name="Pachebat J.A."/>
            <person name="Gloeckner G."/>
            <person name="Rajandream M.A."/>
            <person name="Sucgang R."/>
            <person name="Berriman M."/>
            <person name="Song J."/>
            <person name="Olsen R."/>
            <person name="Szafranski K."/>
            <person name="Xu Q."/>
            <person name="Tunggal B."/>
            <person name="Kummerfeld S."/>
            <person name="Madera M."/>
            <person name="Konfortov B.A."/>
            <person name="Rivero F."/>
            <person name="Bankier A.T."/>
            <person name="Lehmann R."/>
            <person name="Hamlin N."/>
            <person name="Davies R."/>
            <person name="Gaudet P."/>
            <person name="Fey P."/>
            <person name="Pilcher K."/>
            <person name="Chen G."/>
            <person name="Saunders D."/>
            <person name="Sodergren E.J."/>
            <person name="Davis P."/>
            <person name="Kerhornou A."/>
            <person name="Nie X."/>
            <person name="Hall N."/>
            <person name="Anjard C."/>
            <person name="Hemphill L."/>
            <person name="Bason N."/>
            <person name="Farbrother P."/>
            <person name="Desany B."/>
            <person name="Just E."/>
            <person name="Morio T."/>
            <person name="Rost R."/>
            <person name="Churcher C.M."/>
            <person name="Cooper J."/>
            <person name="Haydock S."/>
            <person name="van Driessche N."/>
            <person name="Cronin A."/>
            <person name="Goodhead I."/>
            <person name="Muzny D.M."/>
            <person name="Mourier T."/>
            <person name="Pain A."/>
            <person name="Lu M."/>
            <person name="Harper D."/>
            <person name="Lindsay R."/>
            <person name="Hauser H."/>
            <person name="James K.D."/>
            <person name="Quiles M."/>
            <person name="Madan Babu M."/>
            <person name="Saito T."/>
            <person name="Buchrieser C."/>
            <person name="Wardroper A."/>
            <person name="Felder M."/>
            <person name="Thangavelu M."/>
            <person name="Johnson D."/>
            <person name="Knights A."/>
            <person name="Loulseged H."/>
            <person name="Mungall K.L."/>
            <person name="Oliver K."/>
            <person name="Price C."/>
            <person name="Quail M.A."/>
            <person name="Urushihara H."/>
            <person name="Hernandez J."/>
            <person name="Rabbinowitsch E."/>
            <person name="Steffen D."/>
            <person name="Sanders M."/>
            <person name="Ma J."/>
            <person name="Kohara Y."/>
            <person name="Sharp S."/>
            <person name="Simmonds M.N."/>
            <person name="Spiegler S."/>
            <person name="Tivey A."/>
            <person name="Sugano S."/>
            <person name="White B."/>
            <person name="Walker D."/>
            <person name="Woodward J.R."/>
            <person name="Winckler T."/>
            <person name="Tanaka Y."/>
            <person name="Shaulsky G."/>
            <person name="Schleicher M."/>
            <person name="Weinstock G.M."/>
            <person name="Rosenthal A."/>
            <person name="Cox E.C."/>
            <person name="Chisholm R.L."/>
            <person name="Gibbs R.A."/>
            <person name="Loomis W.F."/>
            <person name="Platzer M."/>
            <person name="Kay R.R."/>
            <person name="Williams J.G."/>
            <person name="Dear P.H."/>
            <person name="Noegel A.A."/>
            <person name="Barrell B.G."/>
            <person name="Kuspa A."/>
        </authorList>
    </citation>
    <scope>NUCLEOTIDE SEQUENCE [LARGE SCALE GENOMIC DNA]</scope>
    <source>
        <strain>AX4</strain>
    </source>
</reference>
<reference key="3">
    <citation type="journal article" date="2006" name="Eur. J. Cell Biol.">
        <title>The Dictyostelium repertoire of seven transmembrane domain receptors.</title>
        <authorList>
            <person name="Prabhu Y."/>
            <person name="Eichinger L."/>
        </authorList>
    </citation>
    <scope>NOMENCLATURE</scope>
</reference>
<reference key="4">
    <citation type="journal article" date="2007" name="BMC Dev. Biol.">
        <title>GrlJ, a Dictyostelium GABAB-like receptor with roles in post-aggregation development.</title>
        <authorList>
            <person name="Prabhu Y."/>
            <person name="Mueller R."/>
            <person name="Anjard C."/>
            <person name="Noegel A.A."/>
        </authorList>
    </citation>
    <scope>DEVELOPMENTAL STAGE</scope>
</reference>
<keyword id="KW-0297">G-protein coupled receptor</keyword>
<keyword id="KW-0325">Glycoprotein</keyword>
<keyword id="KW-0472">Membrane</keyword>
<keyword id="KW-0675">Receptor</keyword>
<keyword id="KW-1185">Reference proteome</keyword>
<keyword id="KW-0732">Signal</keyword>
<keyword id="KW-0807">Transducer</keyword>
<keyword id="KW-0812">Transmembrane</keyword>
<keyword id="KW-1133">Transmembrane helix</keyword>
<proteinExistence type="evidence at transcript level"/>
<comment type="subcellular location">
    <subcellularLocation>
        <location evidence="4">Membrane</location>
        <topology evidence="4">Multi-pass membrane protein</topology>
    </subcellularLocation>
</comment>
<comment type="developmental stage">
    <text evidence="3">Increased levels found from the tight aggregation stage onward. Levels stayed high during late development. Clear expression at 24 hours when fruiting body formation is close to completion.</text>
</comment>
<comment type="similarity">
    <text evidence="4">In the N-terminal section; belongs to the BMP lipoprotein family.</text>
</comment>
<comment type="similarity">
    <text evidence="4">In the C-terminal section; belongs to the G-protein coupled receptor 3 family. GABA-B receptor subfamily.</text>
</comment>
<protein>
    <recommendedName>
        <fullName>Metabotropic glutamate receptor-like protein O</fullName>
    </recommendedName>
</protein>
<evidence type="ECO:0000255" key="1"/>
<evidence type="ECO:0000256" key="2">
    <source>
        <dbReference type="SAM" id="MobiDB-lite"/>
    </source>
</evidence>
<evidence type="ECO:0000269" key="3">
    <source>
    </source>
</evidence>
<evidence type="ECO:0000305" key="4"/>
<accession>Q55AP3</accession>
<accession>Q75JA3</accession>
<accession>Q75JD0</accession>